<sequence>MVYSYTEKKRIRKDFGKRPQVLDIPYLLSIQLDSFQKFIEQDPEGQHGLEAAFRSVFPIQSYSGNSELQYVSYRLGEPVFDVKECQIRGVTYSAPLRVKLRLVIYEREAPEGTVKDIKEQEVYMGEIPLMTENGTFVINGTERVIVSQLHRSPGVFFDSDKGKTHSSGKVLYNARIIPYRGSWLDFEFDPKDNLFVRIDRRRKLPATIILRALNFTTAQILDLFFEKVVFEIRDNKLQMELVPERLRGETASFDIEANGKVYVEKARRITARHIRQLEKDGIDRIEVPVEYIAGKVVAKDYVDASTGELICAANMELSLDLLAKLSQAGHKQIETLFTNDLDHGAYISETLRVDPTSDRLSALVEIYRMMRPGEPPTREAAENLFENLFFSEDRYDLSAVGRMKFNRSLLRDEIEGSGILSKEDITEVMKKLIDIRNGRGEVDDIDHLGNRRIRSVGEMAENQFRVGLVRVERAVKERLSLGDLDTLMPQDMINAKPISAAVKEFFGSSQLSQFMDQNNPLSEITHKRRISALGPGGLTRERAGFEVRDVHPTHYGRVCPIETPEGPNIGLINSLSVYAQTNEYGFLETPYRRVRDGVVTDEINYLSAIEEGNFVIAQANSNLDDEGRFLEDLVTCRSKGESSLFSREQVDYMDVSTQQIVSVGASLIPFLEHDDANRALMGANMQRQAVPTLRADKPLVGTGMERAVAVDSGVTSVAKRGGTVQYVDASRIVIKVNEDEMHPGEAGIDIYNLTKYTRSNQNTCINQMPCVNLGEPIERGDVLADGPSTDLGELALGQNMRVAFMPWNGYNFEDSILVSERVVQEDRFTTIHIQELACVSRDTKLGPEEITADIPNVGEAALSKLDESGIVYIGAEVTGGDILVGKVTPKGETQLTPEEKLLRAIFGEKASDVKDSSLRVPNGVSGTVIDVQVFTRDGVEKDKRALEIEEMQLKQAKKDLTEELQILEAGLFARIHAVLVSGGIEAEKLSKLPRERWLELGLTDEDKQNQLEQLAEQYDEMKSEFEKKMDAKRRKITQGDDLAPGVLKIVKVYLAVKRQIQPGDKMAGRHGNKGVISKINPIEDMPYDENGTPVDIVLNPLGVPSRMNIGQILETHLGMAAKGIGEKINAMLKKQEEVAKLREFIQKAYDLGDNVCQKVDLSTFTDDEVLRLAENLKKGMPIATPVFDGATEKEIKELLQLGGLPTSGQITLFDGRTGEQFERQVTVGYMYMLKLNHLVDDKMHARSTGSYSLVTQQPLGGKAQFGGQRFGEMEVWALEAYGAAYTLQEMLTVKSDDVNGRTKMYKNIVDGDHRMEPGMPESFNVLLKEIRSLGINIELEEE</sequence>
<feature type="chain" id="PRO_0000224123" description="DNA-directed RNA polymerase subunit beta">
    <location>
        <begin position="1"/>
        <end position="1342"/>
    </location>
</feature>
<accession>Q66FQ2</accession>
<gene>
    <name evidence="1" type="primary">rpoB</name>
    <name type="ordered locus">YPTB0283</name>
</gene>
<name>RPOB_YERPS</name>
<organism>
    <name type="scientific">Yersinia pseudotuberculosis serotype I (strain IP32953)</name>
    <dbReference type="NCBI Taxonomy" id="273123"/>
    <lineage>
        <taxon>Bacteria</taxon>
        <taxon>Pseudomonadati</taxon>
        <taxon>Pseudomonadota</taxon>
        <taxon>Gammaproteobacteria</taxon>
        <taxon>Enterobacterales</taxon>
        <taxon>Yersiniaceae</taxon>
        <taxon>Yersinia</taxon>
    </lineage>
</organism>
<proteinExistence type="inferred from homology"/>
<comment type="function">
    <text evidence="1">DNA-dependent RNA polymerase catalyzes the transcription of DNA into RNA using the four ribonucleoside triphosphates as substrates.</text>
</comment>
<comment type="catalytic activity">
    <reaction evidence="1">
        <text>RNA(n) + a ribonucleoside 5'-triphosphate = RNA(n+1) + diphosphate</text>
        <dbReference type="Rhea" id="RHEA:21248"/>
        <dbReference type="Rhea" id="RHEA-COMP:14527"/>
        <dbReference type="Rhea" id="RHEA-COMP:17342"/>
        <dbReference type="ChEBI" id="CHEBI:33019"/>
        <dbReference type="ChEBI" id="CHEBI:61557"/>
        <dbReference type="ChEBI" id="CHEBI:140395"/>
        <dbReference type="EC" id="2.7.7.6"/>
    </reaction>
</comment>
<comment type="subunit">
    <text evidence="1">The RNAP catalytic core consists of 2 alpha, 1 beta, 1 beta' and 1 omega subunit. When a sigma factor is associated with the core the holoenzyme is formed, which can initiate transcription.</text>
</comment>
<comment type="similarity">
    <text evidence="1">Belongs to the RNA polymerase beta chain family.</text>
</comment>
<dbReference type="EC" id="2.7.7.6" evidence="1"/>
<dbReference type="EMBL" id="BX936398">
    <property type="protein sequence ID" value="CAH19523.1"/>
    <property type="molecule type" value="Genomic_DNA"/>
</dbReference>
<dbReference type="RefSeq" id="WP_002210676.1">
    <property type="nucleotide sequence ID" value="NZ_CP009712.1"/>
</dbReference>
<dbReference type="SMR" id="Q66FQ2"/>
<dbReference type="GeneID" id="57974971"/>
<dbReference type="KEGG" id="ypo:BZ17_2290"/>
<dbReference type="KEGG" id="yps:YPTB0283"/>
<dbReference type="PATRIC" id="fig|273123.14.peg.2422"/>
<dbReference type="Proteomes" id="UP000001011">
    <property type="component" value="Chromosome"/>
</dbReference>
<dbReference type="GO" id="GO:0000428">
    <property type="term" value="C:DNA-directed RNA polymerase complex"/>
    <property type="evidence" value="ECO:0007669"/>
    <property type="project" value="UniProtKB-KW"/>
</dbReference>
<dbReference type="GO" id="GO:0003677">
    <property type="term" value="F:DNA binding"/>
    <property type="evidence" value="ECO:0007669"/>
    <property type="project" value="UniProtKB-UniRule"/>
</dbReference>
<dbReference type="GO" id="GO:0003899">
    <property type="term" value="F:DNA-directed RNA polymerase activity"/>
    <property type="evidence" value="ECO:0007669"/>
    <property type="project" value="UniProtKB-UniRule"/>
</dbReference>
<dbReference type="GO" id="GO:0032549">
    <property type="term" value="F:ribonucleoside binding"/>
    <property type="evidence" value="ECO:0007669"/>
    <property type="project" value="InterPro"/>
</dbReference>
<dbReference type="GO" id="GO:0006351">
    <property type="term" value="P:DNA-templated transcription"/>
    <property type="evidence" value="ECO:0007669"/>
    <property type="project" value="UniProtKB-UniRule"/>
</dbReference>
<dbReference type="CDD" id="cd00653">
    <property type="entry name" value="RNA_pol_B_RPB2"/>
    <property type="match status" value="1"/>
</dbReference>
<dbReference type="FunFam" id="2.30.150.10:FF:000001">
    <property type="entry name" value="DNA-directed RNA polymerase subunit beta"/>
    <property type="match status" value="1"/>
</dbReference>
<dbReference type="FunFam" id="2.40.270.10:FF:000003">
    <property type="entry name" value="DNA-directed RNA polymerase subunit beta"/>
    <property type="match status" value="1"/>
</dbReference>
<dbReference type="FunFam" id="2.40.270.10:FF:000004">
    <property type="entry name" value="DNA-directed RNA polymerase subunit beta"/>
    <property type="match status" value="1"/>
</dbReference>
<dbReference type="FunFam" id="2.40.50.100:FF:000006">
    <property type="entry name" value="DNA-directed RNA polymerase subunit beta"/>
    <property type="match status" value="1"/>
</dbReference>
<dbReference type="FunFam" id="2.40.50.150:FF:000001">
    <property type="entry name" value="DNA-directed RNA polymerase subunit beta"/>
    <property type="match status" value="1"/>
</dbReference>
<dbReference type="FunFam" id="3.90.1100.10:FF:000002">
    <property type="entry name" value="DNA-directed RNA polymerase subunit beta"/>
    <property type="match status" value="1"/>
</dbReference>
<dbReference type="FunFam" id="3.90.1110.10:FF:000001">
    <property type="entry name" value="DNA-directed RNA polymerase subunit beta"/>
    <property type="match status" value="1"/>
</dbReference>
<dbReference type="FunFam" id="3.90.1110.10:FF:000004">
    <property type="entry name" value="DNA-directed RNA polymerase subunit beta"/>
    <property type="match status" value="1"/>
</dbReference>
<dbReference type="FunFam" id="3.90.1800.10:FF:000001">
    <property type="entry name" value="DNA-directed RNA polymerase subunit beta"/>
    <property type="match status" value="1"/>
</dbReference>
<dbReference type="Gene3D" id="2.40.50.100">
    <property type="match status" value="1"/>
</dbReference>
<dbReference type="Gene3D" id="2.40.50.150">
    <property type="match status" value="1"/>
</dbReference>
<dbReference type="Gene3D" id="3.90.1100.10">
    <property type="match status" value="2"/>
</dbReference>
<dbReference type="Gene3D" id="2.30.150.10">
    <property type="entry name" value="DNA-directed RNA polymerase, beta subunit, external 1 domain"/>
    <property type="match status" value="1"/>
</dbReference>
<dbReference type="Gene3D" id="2.40.270.10">
    <property type="entry name" value="DNA-directed RNA polymerase, subunit 2, domain 6"/>
    <property type="match status" value="1"/>
</dbReference>
<dbReference type="Gene3D" id="3.90.1800.10">
    <property type="entry name" value="RNA polymerase alpha subunit dimerisation domain"/>
    <property type="match status" value="1"/>
</dbReference>
<dbReference type="Gene3D" id="3.90.1110.10">
    <property type="entry name" value="RNA polymerase Rpb2, domain 2"/>
    <property type="match status" value="1"/>
</dbReference>
<dbReference type="HAMAP" id="MF_01321">
    <property type="entry name" value="RNApol_bact_RpoB"/>
    <property type="match status" value="1"/>
</dbReference>
<dbReference type="InterPro" id="IPR042107">
    <property type="entry name" value="DNA-dir_RNA_pol_bsu_ext_1_sf"/>
</dbReference>
<dbReference type="InterPro" id="IPR019462">
    <property type="entry name" value="DNA-dir_RNA_pol_bsu_external_1"/>
</dbReference>
<dbReference type="InterPro" id="IPR015712">
    <property type="entry name" value="DNA-dir_RNA_pol_su2"/>
</dbReference>
<dbReference type="InterPro" id="IPR007120">
    <property type="entry name" value="DNA-dir_RNAP_su2_dom"/>
</dbReference>
<dbReference type="InterPro" id="IPR037033">
    <property type="entry name" value="DNA-dir_RNAP_su2_hyb_sf"/>
</dbReference>
<dbReference type="InterPro" id="IPR010243">
    <property type="entry name" value="RNA_pol_bsu_bac"/>
</dbReference>
<dbReference type="InterPro" id="IPR007121">
    <property type="entry name" value="RNA_pol_bsu_CS"/>
</dbReference>
<dbReference type="InterPro" id="IPR007644">
    <property type="entry name" value="RNA_pol_bsu_protrusion"/>
</dbReference>
<dbReference type="InterPro" id="IPR007642">
    <property type="entry name" value="RNA_pol_Rpb2_2"/>
</dbReference>
<dbReference type="InterPro" id="IPR037034">
    <property type="entry name" value="RNA_pol_Rpb2_2_sf"/>
</dbReference>
<dbReference type="InterPro" id="IPR007645">
    <property type="entry name" value="RNA_pol_Rpb2_3"/>
</dbReference>
<dbReference type="InterPro" id="IPR007641">
    <property type="entry name" value="RNA_pol_Rpb2_7"/>
</dbReference>
<dbReference type="InterPro" id="IPR014724">
    <property type="entry name" value="RNA_pol_RPB2_OB-fold"/>
</dbReference>
<dbReference type="NCBIfam" id="NF001616">
    <property type="entry name" value="PRK00405.1"/>
    <property type="match status" value="1"/>
</dbReference>
<dbReference type="NCBIfam" id="TIGR02013">
    <property type="entry name" value="rpoB"/>
    <property type="match status" value="1"/>
</dbReference>
<dbReference type="PANTHER" id="PTHR20856">
    <property type="entry name" value="DNA-DIRECTED RNA POLYMERASE I SUBUNIT 2"/>
    <property type="match status" value="1"/>
</dbReference>
<dbReference type="Pfam" id="PF04563">
    <property type="entry name" value="RNA_pol_Rpb2_1"/>
    <property type="match status" value="1"/>
</dbReference>
<dbReference type="Pfam" id="PF04561">
    <property type="entry name" value="RNA_pol_Rpb2_2"/>
    <property type="match status" value="2"/>
</dbReference>
<dbReference type="Pfam" id="PF04565">
    <property type="entry name" value="RNA_pol_Rpb2_3"/>
    <property type="match status" value="1"/>
</dbReference>
<dbReference type="Pfam" id="PF10385">
    <property type="entry name" value="RNA_pol_Rpb2_45"/>
    <property type="match status" value="1"/>
</dbReference>
<dbReference type="Pfam" id="PF00562">
    <property type="entry name" value="RNA_pol_Rpb2_6"/>
    <property type="match status" value="1"/>
</dbReference>
<dbReference type="Pfam" id="PF04560">
    <property type="entry name" value="RNA_pol_Rpb2_7"/>
    <property type="match status" value="1"/>
</dbReference>
<dbReference type="SUPFAM" id="SSF64484">
    <property type="entry name" value="beta and beta-prime subunits of DNA dependent RNA-polymerase"/>
    <property type="match status" value="1"/>
</dbReference>
<dbReference type="PROSITE" id="PS01166">
    <property type="entry name" value="RNA_POL_BETA"/>
    <property type="match status" value="1"/>
</dbReference>
<evidence type="ECO:0000255" key="1">
    <source>
        <dbReference type="HAMAP-Rule" id="MF_01321"/>
    </source>
</evidence>
<keyword id="KW-0240">DNA-directed RNA polymerase</keyword>
<keyword id="KW-0548">Nucleotidyltransferase</keyword>
<keyword id="KW-0804">Transcription</keyword>
<keyword id="KW-0808">Transferase</keyword>
<reference key="1">
    <citation type="journal article" date="2004" name="Proc. Natl. Acad. Sci. U.S.A.">
        <title>Insights into the evolution of Yersinia pestis through whole-genome comparison with Yersinia pseudotuberculosis.</title>
        <authorList>
            <person name="Chain P.S.G."/>
            <person name="Carniel E."/>
            <person name="Larimer F.W."/>
            <person name="Lamerdin J."/>
            <person name="Stoutland P.O."/>
            <person name="Regala W.M."/>
            <person name="Georgescu A.M."/>
            <person name="Vergez L.M."/>
            <person name="Land M.L."/>
            <person name="Motin V.L."/>
            <person name="Brubaker R.R."/>
            <person name="Fowler J."/>
            <person name="Hinnebusch J."/>
            <person name="Marceau M."/>
            <person name="Medigue C."/>
            <person name="Simonet M."/>
            <person name="Chenal-Francisque V."/>
            <person name="Souza B."/>
            <person name="Dacheux D."/>
            <person name="Elliott J.M."/>
            <person name="Derbise A."/>
            <person name="Hauser L.J."/>
            <person name="Garcia E."/>
        </authorList>
    </citation>
    <scope>NUCLEOTIDE SEQUENCE [LARGE SCALE GENOMIC DNA]</scope>
    <source>
        <strain>IP32953</strain>
    </source>
</reference>
<protein>
    <recommendedName>
        <fullName evidence="1">DNA-directed RNA polymerase subunit beta</fullName>
        <shortName evidence="1">RNAP subunit beta</shortName>
        <ecNumber evidence="1">2.7.7.6</ecNumber>
    </recommendedName>
    <alternativeName>
        <fullName evidence="1">RNA polymerase subunit beta</fullName>
    </alternativeName>
    <alternativeName>
        <fullName evidence="1">Transcriptase subunit beta</fullName>
    </alternativeName>
</protein>